<sequence>MTIQQWLFSFKGRIGRRDFWIWIGLWFAGMLVLFSLAGKNLLDIQTAAFCLVCLLWPTAAVTVKRLHDRGRSGAWAFLMIVAWMLLAGNWAILPGVWQWAVGRFVPTLILVMMLIDLGAFVGTQGENKYGKDTQDVKYKADNKSSN</sequence>
<accession>P0AF34</accession>
<accession>P32161</accession>
<accession>Q2M8L7</accession>
<proteinExistence type="predicted"/>
<protein>
    <recommendedName>
        <fullName>Uncharacterized protein YiiR</fullName>
    </recommendedName>
</protein>
<organism>
    <name type="scientific">Escherichia coli (strain K12)</name>
    <dbReference type="NCBI Taxonomy" id="83333"/>
    <lineage>
        <taxon>Bacteria</taxon>
        <taxon>Pseudomonadati</taxon>
        <taxon>Pseudomonadota</taxon>
        <taxon>Gammaproteobacteria</taxon>
        <taxon>Enterobacterales</taxon>
        <taxon>Enterobacteriaceae</taxon>
        <taxon>Escherichia</taxon>
    </lineage>
</organism>
<gene>
    <name type="primary">yiiR</name>
    <name type="ordered locus">b3921</name>
    <name type="ordered locus">JW3892</name>
</gene>
<keyword id="KW-1185">Reference proteome</keyword>
<feature type="chain" id="PRO_0000169690" description="Uncharacterized protein YiiR">
    <location>
        <begin position="1"/>
        <end position="146"/>
    </location>
</feature>
<name>YIIR_ECOLI</name>
<reference key="1">
    <citation type="journal article" date="1993" name="Nucleic Acids Res.">
        <title>Analysis of the Escherichia coli genome. III. DNA sequence of the region from 87.2 to 89.2 minutes.</title>
        <authorList>
            <person name="Plunkett G. III"/>
            <person name="Burland V."/>
            <person name="Daniels D.L."/>
            <person name="Blattner F.R."/>
        </authorList>
    </citation>
    <scope>NUCLEOTIDE SEQUENCE [LARGE SCALE GENOMIC DNA]</scope>
    <source>
        <strain>K12 / MG1655 / ATCC 47076</strain>
    </source>
</reference>
<reference key="2">
    <citation type="journal article" date="1997" name="Science">
        <title>The complete genome sequence of Escherichia coli K-12.</title>
        <authorList>
            <person name="Blattner F.R."/>
            <person name="Plunkett G. III"/>
            <person name="Bloch C.A."/>
            <person name="Perna N.T."/>
            <person name="Burland V."/>
            <person name="Riley M."/>
            <person name="Collado-Vides J."/>
            <person name="Glasner J.D."/>
            <person name="Rode C.K."/>
            <person name="Mayhew G.F."/>
            <person name="Gregor J."/>
            <person name="Davis N.W."/>
            <person name="Kirkpatrick H.A."/>
            <person name="Goeden M.A."/>
            <person name="Rose D.J."/>
            <person name="Mau B."/>
            <person name="Shao Y."/>
        </authorList>
    </citation>
    <scope>NUCLEOTIDE SEQUENCE [LARGE SCALE GENOMIC DNA]</scope>
    <source>
        <strain>K12 / MG1655 / ATCC 47076</strain>
    </source>
</reference>
<reference key="3">
    <citation type="journal article" date="2006" name="Mol. Syst. Biol.">
        <title>Highly accurate genome sequences of Escherichia coli K-12 strains MG1655 and W3110.</title>
        <authorList>
            <person name="Hayashi K."/>
            <person name="Morooka N."/>
            <person name="Yamamoto Y."/>
            <person name="Fujita K."/>
            <person name="Isono K."/>
            <person name="Choi S."/>
            <person name="Ohtsubo E."/>
            <person name="Baba T."/>
            <person name="Wanner B.L."/>
            <person name="Mori H."/>
            <person name="Horiuchi T."/>
        </authorList>
    </citation>
    <scope>NUCLEOTIDE SEQUENCE [LARGE SCALE GENOMIC DNA]</scope>
    <source>
        <strain>K12 / W3110 / ATCC 27325 / DSM 5911</strain>
    </source>
</reference>
<dbReference type="EMBL" id="L19201">
    <property type="protein sequence ID" value="AAB03053.1"/>
    <property type="molecule type" value="Genomic_DNA"/>
</dbReference>
<dbReference type="EMBL" id="U00096">
    <property type="protein sequence ID" value="AAC76903.1"/>
    <property type="molecule type" value="Genomic_DNA"/>
</dbReference>
<dbReference type="EMBL" id="AP009048">
    <property type="protein sequence ID" value="BAE77389.1"/>
    <property type="molecule type" value="Genomic_DNA"/>
</dbReference>
<dbReference type="PIR" id="S40864">
    <property type="entry name" value="S40864"/>
</dbReference>
<dbReference type="RefSeq" id="NP_418356.1">
    <property type="nucleotide sequence ID" value="NC_000913.3"/>
</dbReference>
<dbReference type="RefSeq" id="WP_000155257.1">
    <property type="nucleotide sequence ID" value="NZ_STEB01000017.1"/>
</dbReference>
<dbReference type="BioGRID" id="4261770">
    <property type="interactions" value="4"/>
</dbReference>
<dbReference type="BioGRID" id="852714">
    <property type="interactions" value="1"/>
</dbReference>
<dbReference type="FunCoup" id="P0AF34">
    <property type="interactions" value="51"/>
</dbReference>
<dbReference type="IntAct" id="P0AF34">
    <property type="interactions" value="1"/>
</dbReference>
<dbReference type="STRING" id="511145.b3921"/>
<dbReference type="PaxDb" id="511145-b3921"/>
<dbReference type="DNASU" id="948417"/>
<dbReference type="EnsemblBacteria" id="AAC76903">
    <property type="protein sequence ID" value="AAC76903"/>
    <property type="gene ID" value="b3921"/>
</dbReference>
<dbReference type="GeneID" id="948417"/>
<dbReference type="KEGG" id="ecj:JW3892"/>
<dbReference type="KEGG" id="eco:b3921"/>
<dbReference type="KEGG" id="ecoc:C3026_21195"/>
<dbReference type="PATRIC" id="fig|1411691.4.peg.2784"/>
<dbReference type="EchoBASE" id="EB1821"/>
<dbReference type="eggNOG" id="COG3152">
    <property type="taxonomic scope" value="Bacteria"/>
</dbReference>
<dbReference type="HOGENOM" id="CLU_093674_6_0_6"/>
<dbReference type="InParanoid" id="P0AF34"/>
<dbReference type="OMA" id="RDFWIWM"/>
<dbReference type="OrthoDB" id="9812349at2"/>
<dbReference type="PhylomeDB" id="P0AF34"/>
<dbReference type="BioCyc" id="EcoCyc:EG11875-MONOMER"/>
<dbReference type="PRO" id="PR:P0AF34"/>
<dbReference type="Proteomes" id="UP000000625">
    <property type="component" value="Chromosome"/>
</dbReference>
<dbReference type="GO" id="GO:0005886">
    <property type="term" value="C:plasma membrane"/>
    <property type="evidence" value="ECO:0000314"/>
    <property type="project" value="EcoCyc"/>
</dbReference>
<dbReference type="InterPro" id="IPR008523">
    <property type="entry name" value="DUF805"/>
</dbReference>
<dbReference type="PANTHER" id="PTHR34980:SF1">
    <property type="entry name" value="INNER MEMBRANE PROTEIN"/>
    <property type="match status" value="1"/>
</dbReference>
<dbReference type="PANTHER" id="PTHR34980">
    <property type="entry name" value="INNER MEMBRANE PROTEIN-RELATED-RELATED"/>
    <property type="match status" value="1"/>
</dbReference>
<dbReference type="Pfam" id="PF05656">
    <property type="entry name" value="DUF805"/>
    <property type="match status" value="1"/>
</dbReference>